<accession>B4TN05</accession>
<keyword id="KW-0067">ATP-binding</keyword>
<keyword id="KW-0963">Cytoplasm</keyword>
<keyword id="KW-0227">DNA damage</keyword>
<keyword id="KW-0234">DNA repair</keyword>
<keyword id="KW-0235">DNA replication</keyword>
<keyword id="KW-0238">DNA-binding</keyword>
<keyword id="KW-0547">Nucleotide-binding</keyword>
<keyword id="KW-0742">SOS response</keyword>
<comment type="function">
    <text evidence="1">The RecF protein is involved in DNA metabolism; it is required for DNA replication and normal SOS inducibility. RecF binds preferentially to single-stranded, linear DNA. It also seems to bind ATP.</text>
</comment>
<comment type="subcellular location">
    <subcellularLocation>
        <location evidence="1">Cytoplasm</location>
    </subcellularLocation>
</comment>
<comment type="similarity">
    <text evidence="1">Belongs to the RecF family.</text>
</comment>
<proteinExistence type="inferred from homology"/>
<protein>
    <recommendedName>
        <fullName evidence="1">DNA replication and repair protein RecF</fullName>
    </recommendedName>
</protein>
<gene>
    <name evidence="1" type="primary">recF</name>
    <name type="ordered locus">SeSA_A4048</name>
</gene>
<reference key="1">
    <citation type="journal article" date="2011" name="J. Bacteriol.">
        <title>Comparative genomics of 28 Salmonella enterica isolates: evidence for CRISPR-mediated adaptive sublineage evolution.</title>
        <authorList>
            <person name="Fricke W.F."/>
            <person name="Mammel M.K."/>
            <person name="McDermott P.F."/>
            <person name="Tartera C."/>
            <person name="White D.G."/>
            <person name="Leclerc J.E."/>
            <person name="Ravel J."/>
            <person name="Cebula T.A."/>
        </authorList>
    </citation>
    <scope>NUCLEOTIDE SEQUENCE [LARGE SCALE GENOMIC DNA]</scope>
    <source>
        <strain>CVM19633</strain>
    </source>
</reference>
<feature type="chain" id="PRO_1000121153" description="DNA replication and repair protein RecF">
    <location>
        <begin position="1"/>
        <end position="357"/>
    </location>
</feature>
<feature type="binding site" evidence="1">
    <location>
        <begin position="30"/>
        <end position="37"/>
    </location>
    <ligand>
        <name>ATP</name>
        <dbReference type="ChEBI" id="CHEBI:30616"/>
    </ligand>
</feature>
<evidence type="ECO:0000255" key="1">
    <source>
        <dbReference type="HAMAP-Rule" id="MF_00365"/>
    </source>
</evidence>
<dbReference type="EMBL" id="CP001127">
    <property type="protein sequence ID" value="ACF92546.1"/>
    <property type="molecule type" value="Genomic_DNA"/>
</dbReference>
<dbReference type="RefSeq" id="WP_000060080.1">
    <property type="nucleotide sequence ID" value="NC_011094.1"/>
</dbReference>
<dbReference type="SMR" id="B4TN05"/>
<dbReference type="KEGG" id="sew:SeSA_A4048"/>
<dbReference type="HOGENOM" id="CLU_040267_0_0_6"/>
<dbReference type="Proteomes" id="UP000001865">
    <property type="component" value="Chromosome"/>
</dbReference>
<dbReference type="GO" id="GO:0005737">
    <property type="term" value="C:cytoplasm"/>
    <property type="evidence" value="ECO:0007669"/>
    <property type="project" value="UniProtKB-SubCell"/>
</dbReference>
<dbReference type="GO" id="GO:0005524">
    <property type="term" value="F:ATP binding"/>
    <property type="evidence" value="ECO:0007669"/>
    <property type="project" value="UniProtKB-UniRule"/>
</dbReference>
<dbReference type="GO" id="GO:0003697">
    <property type="term" value="F:single-stranded DNA binding"/>
    <property type="evidence" value="ECO:0007669"/>
    <property type="project" value="UniProtKB-UniRule"/>
</dbReference>
<dbReference type="GO" id="GO:0006260">
    <property type="term" value="P:DNA replication"/>
    <property type="evidence" value="ECO:0007669"/>
    <property type="project" value="UniProtKB-UniRule"/>
</dbReference>
<dbReference type="GO" id="GO:0000731">
    <property type="term" value="P:DNA synthesis involved in DNA repair"/>
    <property type="evidence" value="ECO:0007669"/>
    <property type="project" value="TreeGrafter"/>
</dbReference>
<dbReference type="GO" id="GO:0006302">
    <property type="term" value="P:double-strand break repair"/>
    <property type="evidence" value="ECO:0007669"/>
    <property type="project" value="TreeGrafter"/>
</dbReference>
<dbReference type="GO" id="GO:0009432">
    <property type="term" value="P:SOS response"/>
    <property type="evidence" value="ECO:0007669"/>
    <property type="project" value="UniProtKB-UniRule"/>
</dbReference>
<dbReference type="FunFam" id="1.20.1050.90:FF:000001">
    <property type="entry name" value="DNA replication and repair protein RecF"/>
    <property type="match status" value="1"/>
</dbReference>
<dbReference type="Gene3D" id="3.40.50.300">
    <property type="entry name" value="P-loop containing nucleotide triphosphate hydrolases"/>
    <property type="match status" value="1"/>
</dbReference>
<dbReference type="Gene3D" id="1.20.1050.90">
    <property type="entry name" value="RecF/RecN/SMC, N-terminal domain"/>
    <property type="match status" value="1"/>
</dbReference>
<dbReference type="HAMAP" id="MF_00365">
    <property type="entry name" value="RecF"/>
    <property type="match status" value="1"/>
</dbReference>
<dbReference type="InterPro" id="IPR001238">
    <property type="entry name" value="DNA-binding_RecF"/>
</dbReference>
<dbReference type="InterPro" id="IPR018078">
    <property type="entry name" value="DNA-binding_RecF_CS"/>
</dbReference>
<dbReference type="InterPro" id="IPR027417">
    <property type="entry name" value="P-loop_NTPase"/>
</dbReference>
<dbReference type="InterPro" id="IPR003395">
    <property type="entry name" value="RecF/RecN/SMC_N"/>
</dbReference>
<dbReference type="InterPro" id="IPR042174">
    <property type="entry name" value="RecF_2"/>
</dbReference>
<dbReference type="NCBIfam" id="TIGR00611">
    <property type="entry name" value="recf"/>
    <property type="match status" value="1"/>
</dbReference>
<dbReference type="PANTHER" id="PTHR32182">
    <property type="entry name" value="DNA REPLICATION AND REPAIR PROTEIN RECF"/>
    <property type="match status" value="1"/>
</dbReference>
<dbReference type="PANTHER" id="PTHR32182:SF0">
    <property type="entry name" value="DNA REPLICATION AND REPAIR PROTEIN RECF"/>
    <property type="match status" value="1"/>
</dbReference>
<dbReference type="Pfam" id="PF02463">
    <property type="entry name" value="SMC_N"/>
    <property type="match status" value="1"/>
</dbReference>
<dbReference type="SUPFAM" id="SSF52540">
    <property type="entry name" value="P-loop containing nucleoside triphosphate hydrolases"/>
    <property type="match status" value="1"/>
</dbReference>
<dbReference type="PROSITE" id="PS00617">
    <property type="entry name" value="RECF_1"/>
    <property type="match status" value="1"/>
</dbReference>
<dbReference type="PROSITE" id="PS00618">
    <property type="entry name" value="RECF_2"/>
    <property type="match status" value="1"/>
</dbReference>
<organism>
    <name type="scientific">Salmonella schwarzengrund (strain CVM19633)</name>
    <dbReference type="NCBI Taxonomy" id="439843"/>
    <lineage>
        <taxon>Bacteria</taxon>
        <taxon>Pseudomonadati</taxon>
        <taxon>Pseudomonadota</taxon>
        <taxon>Gammaproteobacteria</taxon>
        <taxon>Enterobacterales</taxon>
        <taxon>Enterobacteriaceae</taxon>
        <taxon>Salmonella</taxon>
    </lineage>
</organism>
<name>RECF_SALSV</name>
<sequence length="357" mass="40538">MSLTRLLIKDFRNIENADLALSPGFNFLVGANGSGKTSVLEAIYTLGHGRAFRSLQPGRVIRHEQEAFVLHGRLQGEERETSIGLTKDKQGDSKVRIDGTDGHKIAELAHLMPMQLITPEGFTLLNGGPKYRRAFLDWGCFHNEAGFFTAWSNLKRLLKQRNAALRQVSRYEQLRPWDKELIPLAEQISTWRAEYSIAIAQDMADTCQQFLPEFSLTFSFQRGWEKETDYADVLERSFERDRMLTYTAHGPHKADFRIRADGAPVEDTLSRGQLKLLMCALRLAQGEFLTRESGRRCLYLIDDFASELDDARRGLLASRLKATQSQVFVSVISAEHVIDMSDENSKMFTVEKGKITD</sequence>